<feature type="chain" id="PRO_0000349046" description="Heme A synthase">
    <location>
        <begin position="1"/>
        <end position="367"/>
    </location>
</feature>
<feature type="transmembrane region" description="Helical" evidence="1">
    <location>
        <begin position="12"/>
        <end position="32"/>
    </location>
</feature>
<feature type="transmembrane region" description="Helical" evidence="1">
    <location>
        <begin position="99"/>
        <end position="119"/>
    </location>
</feature>
<feature type="transmembrane region" description="Helical" evidence="1">
    <location>
        <begin position="127"/>
        <end position="147"/>
    </location>
</feature>
<feature type="transmembrane region" description="Helical" evidence="1">
    <location>
        <begin position="163"/>
        <end position="183"/>
    </location>
</feature>
<feature type="transmembrane region" description="Helical" evidence="1">
    <location>
        <begin position="198"/>
        <end position="218"/>
    </location>
</feature>
<feature type="transmembrane region" description="Helical" evidence="1">
    <location>
        <begin position="266"/>
        <end position="286"/>
    </location>
</feature>
<feature type="transmembrane region" description="Helical" evidence="1">
    <location>
        <begin position="296"/>
        <end position="316"/>
    </location>
</feature>
<feature type="transmembrane region" description="Helical" evidence="1">
    <location>
        <begin position="317"/>
        <end position="337"/>
    </location>
</feature>
<feature type="binding site" description="axial binding residue" evidence="1">
    <location>
        <position position="264"/>
    </location>
    <ligand>
        <name>heme</name>
        <dbReference type="ChEBI" id="CHEBI:30413"/>
    </ligand>
    <ligandPart>
        <name>Fe</name>
        <dbReference type="ChEBI" id="CHEBI:18248"/>
    </ligandPart>
</feature>
<feature type="binding site" description="axial binding residue" evidence="1">
    <location>
        <position position="324"/>
    </location>
    <ligand>
        <name>heme</name>
        <dbReference type="ChEBI" id="CHEBI:30413"/>
    </ligand>
    <ligandPart>
        <name>Fe</name>
        <dbReference type="ChEBI" id="CHEBI:18248"/>
    </ligandPart>
</feature>
<keyword id="KW-1003">Cell membrane</keyword>
<keyword id="KW-0350">Heme biosynthesis</keyword>
<keyword id="KW-0408">Iron</keyword>
<keyword id="KW-0472">Membrane</keyword>
<keyword id="KW-0479">Metal-binding</keyword>
<keyword id="KW-0560">Oxidoreductase</keyword>
<keyword id="KW-0812">Transmembrane</keyword>
<keyword id="KW-1133">Transmembrane helix</keyword>
<dbReference type="EC" id="1.17.99.9" evidence="1"/>
<dbReference type="EMBL" id="CP001001">
    <property type="protein sequence ID" value="ACB24693.1"/>
    <property type="molecule type" value="Genomic_DNA"/>
</dbReference>
<dbReference type="RefSeq" id="WP_012319662.1">
    <property type="nucleotide sequence ID" value="NC_010505.1"/>
</dbReference>
<dbReference type="SMR" id="B1M282"/>
<dbReference type="STRING" id="426355.Mrad2831_2709"/>
<dbReference type="GeneID" id="6138752"/>
<dbReference type="KEGG" id="mrd:Mrad2831_2709"/>
<dbReference type="PATRIC" id="fig|426355.14.peg.2774"/>
<dbReference type="eggNOG" id="COG1612">
    <property type="taxonomic scope" value="Bacteria"/>
</dbReference>
<dbReference type="HOGENOM" id="CLU_017627_0_0_5"/>
<dbReference type="OrthoDB" id="9793156at2"/>
<dbReference type="UniPathway" id="UPA00269">
    <property type="reaction ID" value="UER00713"/>
</dbReference>
<dbReference type="Proteomes" id="UP000006589">
    <property type="component" value="Chromosome"/>
</dbReference>
<dbReference type="GO" id="GO:0005886">
    <property type="term" value="C:plasma membrane"/>
    <property type="evidence" value="ECO:0007669"/>
    <property type="project" value="UniProtKB-SubCell"/>
</dbReference>
<dbReference type="GO" id="GO:0046872">
    <property type="term" value="F:metal ion binding"/>
    <property type="evidence" value="ECO:0007669"/>
    <property type="project" value="UniProtKB-KW"/>
</dbReference>
<dbReference type="GO" id="GO:0016653">
    <property type="term" value="F:oxidoreductase activity, acting on NAD(P)H, heme protein as acceptor"/>
    <property type="evidence" value="ECO:0007669"/>
    <property type="project" value="InterPro"/>
</dbReference>
<dbReference type="GO" id="GO:0006784">
    <property type="term" value="P:heme A biosynthetic process"/>
    <property type="evidence" value="ECO:0007669"/>
    <property type="project" value="UniProtKB-UniRule"/>
</dbReference>
<dbReference type="HAMAP" id="MF_01665">
    <property type="entry name" value="HemeA_synth_type2"/>
    <property type="match status" value="1"/>
</dbReference>
<dbReference type="InterPro" id="IPR003780">
    <property type="entry name" value="COX15/CtaA_fam"/>
</dbReference>
<dbReference type="InterPro" id="IPR023754">
    <property type="entry name" value="HemeA_Synthase_type2"/>
</dbReference>
<dbReference type="PANTHER" id="PTHR23289">
    <property type="entry name" value="CYTOCHROME C OXIDASE ASSEMBLY PROTEIN COX15"/>
    <property type="match status" value="1"/>
</dbReference>
<dbReference type="PANTHER" id="PTHR23289:SF2">
    <property type="entry name" value="CYTOCHROME C OXIDASE ASSEMBLY PROTEIN COX15 HOMOLOG"/>
    <property type="match status" value="1"/>
</dbReference>
<dbReference type="Pfam" id="PF02628">
    <property type="entry name" value="COX15-CtaA"/>
    <property type="match status" value="1"/>
</dbReference>
<protein>
    <recommendedName>
        <fullName evidence="1">Heme A synthase</fullName>
        <shortName evidence="1">HAS</shortName>
        <ecNumber evidence="1">1.17.99.9</ecNumber>
    </recommendedName>
    <alternativeName>
        <fullName evidence="1">Cytochrome aa3-controlling protein</fullName>
    </alternativeName>
</protein>
<evidence type="ECO:0000255" key="1">
    <source>
        <dbReference type="HAMAP-Rule" id="MF_01665"/>
    </source>
</evidence>
<proteinExistence type="inferred from homology"/>
<accession>B1M282</accession>
<comment type="function">
    <text evidence="1">Catalyzes the conversion of heme O to heme A by two successive hydroxylations of the methyl group at C8. The first hydroxylation forms heme I, the second hydroxylation results in an unstable dihydroxymethyl group, which spontaneously dehydrates, resulting in the formyl group of heme A.</text>
</comment>
<comment type="catalytic activity">
    <reaction evidence="1">
        <text>Fe(II)-heme o + 2 A + H2O = Fe(II)-heme a + 2 AH2</text>
        <dbReference type="Rhea" id="RHEA:63388"/>
        <dbReference type="ChEBI" id="CHEBI:13193"/>
        <dbReference type="ChEBI" id="CHEBI:15377"/>
        <dbReference type="ChEBI" id="CHEBI:17499"/>
        <dbReference type="ChEBI" id="CHEBI:60530"/>
        <dbReference type="ChEBI" id="CHEBI:61715"/>
        <dbReference type="EC" id="1.17.99.9"/>
    </reaction>
    <physiologicalReaction direction="left-to-right" evidence="1">
        <dbReference type="Rhea" id="RHEA:63389"/>
    </physiologicalReaction>
</comment>
<comment type="cofactor">
    <cofactor evidence="1">
        <name>heme b</name>
        <dbReference type="ChEBI" id="CHEBI:60344"/>
    </cofactor>
</comment>
<comment type="pathway">
    <text evidence="1">Porphyrin-containing compound metabolism; heme A biosynthesis; heme A from heme O: step 1/1.</text>
</comment>
<comment type="subunit">
    <text evidence="1">Interacts with CtaB.</text>
</comment>
<comment type="subcellular location">
    <subcellularLocation>
        <location evidence="1">Cell membrane</location>
        <topology evidence="1">Multi-pass membrane protein</topology>
    </subcellularLocation>
</comment>
<comment type="similarity">
    <text evidence="1">Belongs to the COX15/CtaA family. Type 2 subfamily.</text>
</comment>
<sequence>MDMSGAGDRRSGAVRTWLYVVAALVVAMVAVGGATRLTGSGLSITEWRPVTGAIPPLTEADWAAEFAKYRDTPQYNILNQGMGLSAFKVLYGWEWGHRLLGRVIGLVFFLPLILFWWQGRISRRLGLGLLGLGLLGGLQGAIGWIMVASGLQPGMTAVAPLKLALHLTTASLILAGLVWLAAGERRGVLAPAPARLRATALLLPILVLVQIFLGGLVAGSHAGLVYNTWPTMDGQLVPPLDSLFAIRPWIENFVDNHALVQFDHRVTAYLVFVVAVLHAVDARLTGPKSAAGRAAGVVILVLAQMALGIATLLLAVPLWAALAHQVLAMAVLTMATVHARLSRGFGLVEPAAAEPPLGFEGLAGGRI</sequence>
<reference key="1">
    <citation type="submission" date="2008-03" db="EMBL/GenBank/DDBJ databases">
        <title>Complete sequence of chromosome of Methylobacterium radiotolerans JCM 2831.</title>
        <authorList>
            <consortium name="US DOE Joint Genome Institute"/>
            <person name="Copeland A."/>
            <person name="Lucas S."/>
            <person name="Lapidus A."/>
            <person name="Glavina del Rio T."/>
            <person name="Dalin E."/>
            <person name="Tice H."/>
            <person name="Bruce D."/>
            <person name="Goodwin L."/>
            <person name="Pitluck S."/>
            <person name="Kiss H."/>
            <person name="Brettin T."/>
            <person name="Detter J.C."/>
            <person name="Han C."/>
            <person name="Kuske C.R."/>
            <person name="Schmutz J."/>
            <person name="Larimer F."/>
            <person name="Land M."/>
            <person name="Hauser L."/>
            <person name="Kyrpides N."/>
            <person name="Mikhailova N."/>
            <person name="Marx C.J."/>
            <person name="Richardson P."/>
        </authorList>
    </citation>
    <scope>NUCLEOTIDE SEQUENCE [LARGE SCALE GENOMIC DNA]</scope>
    <source>
        <strain>ATCC 27329 / DSM 1819 / JCM 2831 / NBRC 15690 / NCIMB 10815 / 0-1</strain>
    </source>
</reference>
<gene>
    <name evidence="1" type="primary">ctaA</name>
    <name type="ordered locus">Mrad2831_2709</name>
</gene>
<organism>
    <name type="scientific">Methylobacterium radiotolerans (strain ATCC 27329 / DSM 1819 / JCM 2831 / NBRC 15690 / NCIMB 10815 / 0-1)</name>
    <dbReference type="NCBI Taxonomy" id="426355"/>
    <lineage>
        <taxon>Bacteria</taxon>
        <taxon>Pseudomonadati</taxon>
        <taxon>Pseudomonadota</taxon>
        <taxon>Alphaproteobacteria</taxon>
        <taxon>Hyphomicrobiales</taxon>
        <taxon>Methylobacteriaceae</taxon>
        <taxon>Methylobacterium</taxon>
    </lineage>
</organism>
<name>CTAA_METRJ</name>